<comment type="function">
    <text evidence="2">GTP hydrolase that promotes the GTP-dependent binding of aminoacyl-tRNA to the A-site of ribosomes during protein biosynthesis.</text>
</comment>
<comment type="catalytic activity">
    <reaction evidence="2">
        <text>GTP + H2O = GDP + phosphate + H(+)</text>
        <dbReference type="Rhea" id="RHEA:19669"/>
        <dbReference type="ChEBI" id="CHEBI:15377"/>
        <dbReference type="ChEBI" id="CHEBI:15378"/>
        <dbReference type="ChEBI" id="CHEBI:37565"/>
        <dbReference type="ChEBI" id="CHEBI:43474"/>
        <dbReference type="ChEBI" id="CHEBI:58189"/>
        <dbReference type="EC" id="3.6.5.3"/>
    </reaction>
    <physiologicalReaction direction="left-to-right" evidence="2">
        <dbReference type="Rhea" id="RHEA:19670"/>
    </physiologicalReaction>
</comment>
<comment type="subunit">
    <text evidence="2">Monomer.</text>
</comment>
<comment type="subcellular location">
    <subcellularLocation>
        <location evidence="2">Cytoplasm</location>
    </subcellularLocation>
</comment>
<comment type="similarity">
    <text evidence="2">Belongs to the TRAFAC class translation factor GTPase superfamily. Classic translation factor GTPase family. EF-Tu/EF-1A subfamily.</text>
</comment>
<evidence type="ECO:0000250" key="1"/>
<evidence type="ECO:0000255" key="2">
    <source>
        <dbReference type="HAMAP-Rule" id="MF_00118"/>
    </source>
</evidence>
<proteinExistence type="inferred from homology"/>
<organism>
    <name type="scientific">Trichormus variabilis (strain ATCC 29413 / PCC 7937)</name>
    <name type="common">Anabaena variabilis</name>
    <dbReference type="NCBI Taxonomy" id="240292"/>
    <lineage>
        <taxon>Bacteria</taxon>
        <taxon>Bacillati</taxon>
        <taxon>Cyanobacteriota</taxon>
        <taxon>Cyanophyceae</taxon>
        <taxon>Nostocales</taxon>
        <taxon>Nostocaceae</taxon>
        <taxon>Trichormus</taxon>
    </lineage>
</organism>
<feature type="chain" id="PRO_1000015599" description="Elongation factor Tu">
    <location>
        <begin position="1"/>
        <end position="409"/>
    </location>
</feature>
<feature type="domain" description="tr-type G">
    <location>
        <begin position="10"/>
        <end position="214"/>
    </location>
</feature>
<feature type="region of interest" description="G1" evidence="1">
    <location>
        <begin position="19"/>
        <end position="26"/>
    </location>
</feature>
<feature type="region of interest" description="G2" evidence="1">
    <location>
        <begin position="60"/>
        <end position="64"/>
    </location>
</feature>
<feature type="region of interest" description="G3" evidence="1">
    <location>
        <begin position="81"/>
        <end position="84"/>
    </location>
</feature>
<feature type="region of interest" description="G4" evidence="1">
    <location>
        <begin position="136"/>
        <end position="139"/>
    </location>
</feature>
<feature type="region of interest" description="G5" evidence="1">
    <location>
        <begin position="174"/>
        <end position="176"/>
    </location>
</feature>
<feature type="binding site" evidence="2">
    <location>
        <begin position="19"/>
        <end position="26"/>
    </location>
    <ligand>
        <name>GTP</name>
        <dbReference type="ChEBI" id="CHEBI:37565"/>
    </ligand>
</feature>
<feature type="binding site" evidence="2">
    <location>
        <position position="26"/>
    </location>
    <ligand>
        <name>Mg(2+)</name>
        <dbReference type="ChEBI" id="CHEBI:18420"/>
    </ligand>
</feature>
<feature type="binding site" evidence="2">
    <location>
        <begin position="81"/>
        <end position="85"/>
    </location>
    <ligand>
        <name>GTP</name>
        <dbReference type="ChEBI" id="CHEBI:37565"/>
    </ligand>
</feature>
<feature type="binding site" evidence="2">
    <location>
        <begin position="136"/>
        <end position="139"/>
    </location>
    <ligand>
        <name>GTP</name>
        <dbReference type="ChEBI" id="CHEBI:37565"/>
    </ligand>
</feature>
<accession>Q3MDM5</accession>
<keyword id="KW-0963">Cytoplasm</keyword>
<keyword id="KW-0251">Elongation factor</keyword>
<keyword id="KW-0342">GTP-binding</keyword>
<keyword id="KW-0378">Hydrolase</keyword>
<keyword id="KW-0460">Magnesium</keyword>
<keyword id="KW-0479">Metal-binding</keyword>
<keyword id="KW-0547">Nucleotide-binding</keyword>
<keyword id="KW-0648">Protein biosynthesis</keyword>
<name>EFTU_TRIV2</name>
<protein>
    <recommendedName>
        <fullName evidence="2">Elongation factor Tu</fullName>
        <shortName evidence="2">EF-Tu</shortName>
        <ecNumber evidence="2">3.6.5.3</ecNumber>
    </recommendedName>
</protein>
<dbReference type="EC" id="3.6.5.3" evidence="2"/>
<dbReference type="EMBL" id="CP000117">
    <property type="protein sequence ID" value="ABA20911.1"/>
    <property type="molecule type" value="Genomic_DNA"/>
</dbReference>
<dbReference type="SMR" id="Q3MDM5"/>
<dbReference type="STRING" id="240292.Ava_1287"/>
<dbReference type="KEGG" id="ava:Ava_1287"/>
<dbReference type="eggNOG" id="COG0050">
    <property type="taxonomic scope" value="Bacteria"/>
</dbReference>
<dbReference type="HOGENOM" id="CLU_007265_0_0_3"/>
<dbReference type="Proteomes" id="UP000002533">
    <property type="component" value="Chromosome"/>
</dbReference>
<dbReference type="GO" id="GO:0005829">
    <property type="term" value="C:cytosol"/>
    <property type="evidence" value="ECO:0007669"/>
    <property type="project" value="TreeGrafter"/>
</dbReference>
<dbReference type="GO" id="GO:0005525">
    <property type="term" value="F:GTP binding"/>
    <property type="evidence" value="ECO:0007669"/>
    <property type="project" value="UniProtKB-UniRule"/>
</dbReference>
<dbReference type="GO" id="GO:0003924">
    <property type="term" value="F:GTPase activity"/>
    <property type="evidence" value="ECO:0007669"/>
    <property type="project" value="InterPro"/>
</dbReference>
<dbReference type="GO" id="GO:0003746">
    <property type="term" value="F:translation elongation factor activity"/>
    <property type="evidence" value="ECO:0007669"/>
    <property type="project" value="UniProtKB-UniRule"/>
</dbReference>
<dbReference type="CDD" id="cd01884">
    <property type="entry name" value="EF_Tu"/>
    <property type="match status" value="1"/>
</dbReference>
<dbReference type="CDD" id="cd03697">
    <property type="entry name" value="EFTU_II"/>
    <property type="match status" value="1"/>
</dbReference>
<dbReference type="CDD" id="cd03707">
    <property type="entry name" value="EFTU_III"/>
    <property type="match status" value="1"/>
</dbReference>
<dbReference type="FunFam" id="2.40.30.10:FF:000001">
    <property type="entry name" value="Elongation factor Tu"/>
    <property type="match status" value="1"/>
</dbReference>
<dbReference type="FunFam" id="2.40.30.10:FF:000046">
    <property type="entry name" value="Elongation factor Tu"/>
    <property type="match status" value="1"/>
</dbReference>
<dbReference type="FunFam" id="3.40.50.300:FF:000003">
    <property type="entry name" value="Elongation factor Tu"/>
    <property type="match status" value="1"/>
</dbReference>
<dbReference type="Gene3D" id="3.40.50.300">
    <property type="entry name" value="P-loop containing nucleotide triphosphate hydrolases"/>
    <property type="match status" value="1"/>
</dbReference>
<dbReference type="Gene3D" id="2.40.30.10">
    <property type="entry name" value="Translation factors"/>
    <property type="match status" value="2"/>
</dbReference>
<dbReference type="HAMAP" id="MF_00118_B">
    <property type="entry name" value="EF_Tu_B"/>
    <property type="match status" value="1"/>
</dbReference>
<dbReference type="InterPro" id="IPR041709">
    <property type="entry name" value="EF-Tu_GTP-bd"/>
</dbReference>
<dbReference type="InterPro" id="IPR050055">
    <property type="entry name" value="EF-Tu_GTPase"/>
</dbReference>
<dbReference type="InterPro" id="IPR004161">
    <property type="entry name" value="EFTu-like_2"/>
</dbReference>
<dbReference type="InterPro" id="IPR033720">
    <property type="entry name" value="EFTU_2"/>
</dbReference>
<dbReference type="InterPro" id="IPR031157">
    <property type="entry name" value="G_TR_CS"/>
</dbReference>
<dbReference type="InterPro" id="IPR027417">
    <property type="entry name" value="P-loop_NTPase"/>
</dbReference>
<dbReference type="InterPro" id="IPR005225">
    <property type="entry name" value="Small_GTP-bd"/>
</dbReference>
<dbReference type="InterPro" id="IPR000795">
    <property type="entry name" value="T_Tr_GTP-bd_dom"/>
</dbReference>
<dbReference type="InterPro" id="IPR009000">
    <property type="entry name" value="Transl_B-barrel_sf"/>
</dbReference>
<dbReference type="InterPro" id="IPR009001">
    <property type="entry name" value="Transl_elong_EF1A/Init_IF2_C"/>
</dbReference>
<dbReference type="InterPro" id="IPR004541">
    <property type="entry name" value="Transl_elong_EFTu/EF1A_bac/org"/>
</dbReference>
<dbReference type="InterPro" id="IPR004160">
    <property type="entry name" value="Transl_elong_EFTu/EF1A_C"/>
</dbReference>
<dbReference type="NCBIfam" id="TIGR00485">
    <property type="entry name" value="EF-Tu"/>
    <property type="match status" value="1"/>
</dbReference>
<dbReference type="NCBIfam" id="NF000766">
    <property type="entry name" value="PRK00049.1"/>
    <property type="match status" value="1"/>
</dbReference>
<dbReference type="NCBIfam" id="NF009372">
    <property type="entry name" value="PRK12735.1"/>
    <property type="match status" value="1"/>
</dbReference>
<dbReference type="NCBIfam" id="NF009373">
    <property type="entry name" value="PRK12736.1"/>
    <property type="match status" value="1"/>
</dbReference>
<dbReference type="NCBIfam" id="TIGR00231">
    <property type="entry name" value="small_GTP"/>
    <property type="match status" value="1"/>
</dbReference>
<dbReference type="PANTHER" id="PTHR43721:SF22">
    <property type="entry name" value="ELONGATION FACTOR TU, MITOCHONDRIAL"/>
    <property type="match status" value="1"/>
</dbReference>
<dbReference type="PANTHER" id="PTHR43721">
    <property type="entry name" value="ELONGATION FACTOR TU-RELATED"/>
    <property type="match status" value="1"/>
</dbReference>
<dbReference type="Pfam" id="PF00009">
    <property type="entry name" value="GTP_EFTU"/>
    <property type="match status" value="1"/>
</dbReference>
<dbReference type="Pfam" id="PF03144">
    <property type="entry name" value="GTP_EFTU_D2"/>
    <property type="match status" value="1"/>
</dbReference>
<dbReference type="Pfam" id="PF03143">
    <property type="entry name" value="GTP_EFTU_D3"/>
    <property type="match status" value="1"/>
</dbReference>
<dbReference type="PRINTS" id="PR00315">
    <property type="entry name" value="ELONGATNFCT"/>
</dbReference>
<dbReference type="SUPFAM" id="SSF50465">
    <property type="entry name" value="EF-Tu/eEF-1alpha/eIF2-gamma C-terminal domain"/>
    <property type="match status" value="1"/>
</dbReference>
<dbReference type="SUPFAM" id="SSF52540">
    <property type="entry name" value="P-loop containing nucleoside triphosphate hydrolases"/>
    <property type="match status" value="1"/>
</dbReference>
<dbReference type="SUPFAM" id="SSF50447">
    <property type="entry name" value="Translation proteins"/>
    <property type="match status" value="1"/>
</dbReference>
<dbReference type="PROSITE" id="PS00301">
    <property type="entry name" value="G_TR_1"/>
    <property type="match status" value="1"/>
</dbReference>
<dbReference type="PROSITE" id="PS51722">
    <property type="entry name" value="G_TR_2"/>
    <property type="match status" value="1"/>
</dbReference>
<gene>
    <name evidence="2" type="primary">tuf</name>
    <name type="ordered locus">Ava_1287</name>
</gene>
<sequence>MARAKFERTKPHVNIGTIGHVDHGKTTLTAAITMTLAALGQAVAKGYDQIDNAPEEKARGITINTAHVEYETANRHYAHVDCPGHADYVKNMITGAAQMDGAILVVAATDGPMPQTREHILLAKQVGVPKLVVFLNKEDMMEDAELLELVELELRELLTEYEFDGDDIPIVRGSGLQALDVMTKNPKTQRGENPWVDKIYELMDAVDSYIPDPERDIDKPFLMAVEDVFSITGRGTVATGRIERGKVKVGDVVELVGIRDTRNTTVTGIEMFKKSLDEGMAGDNAGVLLRGIQKTDIERGMVLAKPGSITPHTQFEGEVYVLTEKEGGRKTPFFAGYRPQFYVRTTDVTGTIKAFTSDEGEAVEMVMPGDRIKVTVELINPIAIEQGMRFAIREGGRTIGAGVVSKIVK</sequence>
<reference key="1">
    <citation type="journal article" date="2014" name="Stand. Genomic Sci.">
        <title>Complete genome sequence of Anabaena variabilis ATCC 29413.</title>
        <authorList>
            <person name="Thiel T."/>
            <person name="Pratte B.S."/>
            <person name="Zhong J."/>
            <person name="Goodwin L."/>
            <person name="Copeland A."/>
            <person name="Lucas S."/>
            <person name="Han C."/>
            <person name="Pitluck S."/>
            <person name="Land M.L."/>
            <person name="Kyrpides N.C."/>
            <person name="Woyke T."/>
        </authorList>
    </citation>
    <scope>NUCLEOTIDE SEQUENCE [LARGE SCALE GENOMIC DNA]</scope>
    <source>
        <strain>ATCC 29413 / PCC 7937</strain>
    </source>
</reference>